<dbReference type="EMBL" id="AB025632">
    <property type="protein sequence ID" value="BAB10259.1"/>
    <property type="status" value="ALT_INIT"/>
    <property type="molecule type" value="Genomic_DNA"/>
</dbReference>
<dbReference type="EMBL" id="CP002688">
    <property type="protein sequence ID" value="AED97053.1"/>
    <property type="molecule type" value="Genomic_DNA"/>
</dbReference>
<dbReference type="EMBL" id="AY099775">
    <property type="protein sequence ID" value="AAM20626.1"/>
    <property type="molecule type" value="mRNA"/>
</dbReference>
<dbReference type="EMBL" id="BT000285">
    <property type="protein sequence ID" value="AAN15604.1"/>
    <property type="molecule type" value="mRNA"/>
</dbReference>
<dbReference type="RefSeq" id="NP_200652.2">
    <property type="nucleotide sequence ID" value="NM_125230.6"/>
</dbReference>
<dbReference type="SMR" id="Q8L5Z7"/>
<dbReference type="BioGRID" id="21201">
    <property type="interactions" value="1"/>
</dbReference>
<dbReference type="FunCoup" id="Q8L5Z7">
    <property type="interactions" value="1315"/>
</dbReference>
<dbReference type="IntAct" id="Q8L5Z7">
    <property type="interactions" value="2"/>
</dbReference>
<dbReference type="STRING" id="3702.Q8L5Z7"/>
<dbReference type="iPTMnet" id="Q8L5Z7"/>
<dbReference type="PaxDb" id="3702-AT5G58440.1"/>
<dbReference type="ProteomicsDB" id="232664"/>
<dbReference type="EnsemblPlants" id="AT5G58440.1">
    <property type="protein sequence ID" value="AT5G58440.1"/>
    <property type="gene ID" value="AT5G58440"/>
</dbReference>
<dbReference type="GeneID" id="835957"/>
<dbReference type="Gramene" id="AT5G58440.1">
    <property type="protein sequence ID" value="AT5G58440.1"/>
    <property type="gene ID" value="AT5G58440"/>
</dbReference>
<dbReference type="KEGG" id="ath:AT5G58440"/>
<dbReference type="Araport" id="AT5G58440"/>
<dbReference type="TAIR" id="AT5G58440">
    <property type="gene designation" value="SNX2A"/>
</dbReference>
<dbReference type="eggNOG" id="KOG2273">
    <property type="taxonomic scope" value="Eukaryota"/>
</dbReference>
<dbReference type="HOGENOM" id="CLU_029979_0_0_1"/>
<dbReference type="InParanoid" id="Q8L5Z7"/>
<dbReference type="OMA" id="MLVNHRK"/>
<dbReference type="OrthoDB" id="271164at2759"/>
<dbReference type="PhylomeDB" id="Q8L5Z7"/>
<dbReference type="PRO" id="PR:Q8L5Z7"/>
<dbReference type="Proteomes" id="UP000006548">
    <property type="component" value="Chromosome 5"/>
</dbReference>
<dbReference type="ExpressionAtlas" id="Q8L5Z7">
    <property type="expression patterns" value="baseline and differential"/>
</dbReference>
<dbReference type="GO" id="GO:0005829">
    <property type="term" value="C:cytosol"/>
    <property type="evidence" value="ECO:0000314"/>
    <property type="project" value="TAIR"/>
</dbReference>
<dbReference type="GO" id="GO:0005794">
    <property type="term" value="C:Golgi apparatus"/>
    <property type="evidence" value="ECO:0007669"/>
    <property type="project" value="UniProtKB-SubCell"/>
</dbReference>
<dbReference type="GO" id="GO:0032585">
    <property type="term" value="C:multivesicular body membrane"/>
    <property type="evidence" value="ECO:0000314"/>
    <property type="project" value="TAIR"/>
</dbReference>
<dbReference type="GO" id="GO:0009536">
    <property type="term" value="C:plastid"/>
    <property type="evidence" value="ECO:0007005"/>
    <property type="project" value="TAIR"/>
</dbReference>
<dbReference type="GO" id="GO:0030904">
    <property type="term" value="C:retromer complex"/>
    <property type="evidence" value="ECO:0000304"/>
    <property type="project" value="UniProtKB"/>
</dbReference>
<dbReference type="GO" id="GO:0035091">
    <property type="term" value="F:phosphatidylinositol binding"/>
    <property type="evidence" value="ECO:0007669"/>
    <property type="project" value="InterPro"/>
</dbReference>
<dbReference type="GO" id="GO:0032502">
    <property type="term" value="P:developmental process"/>
    <property type="evidence" value="ECO:0000316"/>
    <property type="project" value="TAIR"/>
</dbReference>
<dbReference type="GO" id="GO:0051604">
    <property type="term" value="P:protein maturation"/>
    <property type="evidence" value="ECO:0000315"/>
    <property type="project" value="TAIR"/>
</dbReference>
<dbReference type="GO" id="GO:0015031">
    <property type="term" value="P:protein transport"/>
    <property type="evidence" value="ECO:0007669"/>
    <property type="project" value="UniProtKB-KW"/>
</dbReference>
<dbReference type="GO" id="GO:0090351">
    <property type="term" value="P:seedling development"/>
    <property type="evidence" value="ECO:0000316"/>
    <property type="project" value="TAIR"/>
</dbReference>
<dbReference type="CDD" id="cd07596">
    <property type="entry name" value="BAR_SNX"/>
    <property type="match status" value="1"/>
</dbReference>
<dbReference type="CDD" id="cd06865">
    <property type="entry name" value="PX_SNX_like"/>
    <property type="match status" value="1"/>
</dbReference>
<dbReference type="FunFam" id="1.20.1270.60:FF:000081">
    <property type="entry name" value="Sorting nexin 2B"/>
    <property type="match status" value="1"/>
</dbReference>
<dbReference type="FunFam" id="3.30.1520.10:FF:000059">
    <property type="entry name" value="Sorting nexin 2B"/>
    <property type="match status" value="1"/>
</dbReference>
<dbReference type="Gene3D" id="1.20.1270.60">
    <property type="entry name" value="Arfaptin homology (AH) domain/BAR domain"/>
    <property type="match status" value="1"/>
</dbReference>
<dbReference type="Gene3D" id="3.30.1520.10">
    <property type="entry name" value="Phox-like domain"/>
    <property type="match status" value="1"/>
</dbReference>
<dbReference type="InterPro" id="IPR027267">
    <property type="entry name" value="AH/BAR_dom_sf"/>
</dbReference>
<dbReference type="InterPro" id="IPR001683">
    <property type="entry name" value="PX_dom"/>
</dbReference>
<dbReference type="InterPro" id="IPR036871">
    <property type="entry name" value="PX_dom_sf"/>
</dbReference>
<dbReference type="InterPro" id="IPR044279">
    <property type="entry name" value="SNX2A/B"/>
</dbReference>
<dbReference type="InterPro" id="IPR015404">
    <property type="entry name" value="Vps5_C"/>
</dbReference>
<dbReference type="PANTHER" id="PTHR46757:SF11">
    <property type="entry name" value="SORTING NEXIN 2A"/>
    <property type="match status" value="1"/>
</dbReference>
<dbReference type="PANTHER" id="PTHR46757">
    <property type="entry name" value="SORTING NEXIN-RELATED"/>
    <property type="match status" value="1"/>
</dbReference>
<dbReference type="Pfam" id="PF00787">
    <property type="entry name" value="PX"/>
    <property type="match status" value="1"/>
</dbReference>
<dbReference type="Pfam" id="PF09325">
    <property type="entry name" value="Vps5"/>
    <property type="match status" value="1"/>
</dbReference>
<dbReference type="SMART" id="SM00312">
    <property type="entry name" value="PX"/>
    <property type="match status" value="1"/>
</dbReference>
<dbReference type="SUPFAM" id="SSF64268">
    <property type="entry name" value="PX domain"/>
    <property type="match status" value="1"/>
</dbReference>
<dbReference type="PROSITE" id="PS50195">
    <property type="entry name" value="PX"/>
    <property type="match status" value="1"/>
</dbReference>
<organism>
    <name type="scientific">Arabidopsis thaliana</name>
    <name type="common">Mouse-ear cress</name>
    <dbReference type="NCBI Taxonomy" id="3702"/>
    <lineage>
        <taxon>Eukaryota</taxon>
        <taxon>Viridiplantae</taxon>
        <taxon>Streptophyta</taxon>
        <taxon>Embryophyta</taxon>
        <taxon>Tracheophyta</taxon>
        <taxon>Spermatophyta</taxon>
        <taxon>Magnoliopsida</taxon>
        <taxon>eudicotyledons</taxon>
        <taxon>Gunneridae</taxon>
        <taxon>Pentapetalae</taxon>
        <taxon>rosids</taxon>
        <taxon>malvids</taxon>
        <taxon>Brassicales</taxon>
        <taxon>Brassicaceae</taxon>
        <taxon>Camelineae</taxon>
        <taxon>Arabidopsis</taxon>
    </lineage>
</organism>
<sequence length="587" mass="65527">MMGSENADGFEETNLNAQRDDMENLDLGVDGGDHPLKISDVNGDTSNSGYRSAMSTLSNVRDPLSPPPTVMIPADSDPLLAPSSYEDFRSSFSSKPISSDNSYIEPPSYADVIFSPFDENSDSEINGTEDNSLHSQFSDSLSRSPSSSSSDYIKITVSNPQKEQEISNSIVGGNTYITYQITTRTNLPDFGGPSEFSVRRRFRDVVTLADRLAETYRGFCIPPRPDKSVVESQVMQKQEFVEQRRVALEKYLRRLSAHPVIRNSDELKVFLQVQGKLPLPMSTDVASRMLDGAVKLPKQLFGEGGASAVPVTEVGQPARGGRDLLRLFKELRQSVSNDWGGSKPPVVEEDKEFLEKKEKMHDLEQQIINASQQAESLVKAQQDMGETMGELGLAFIKLTKFENEEAVCNPQRTRANDMKNLATAAVKASRFYRELNSQTVKHLDTLHEYLGMMMAVQGAFADRSSALLTVQTLLSELPSLQTRVEKLEAASSKVFGGDKSRIRKIEELKETIKVTEDAKNVAIKGYERIKENNRSEVERLDRERRADFMNMMKGFVVNQVGYAEKMGNVWAKVAEETSQYDREKQSS</sequence>
<keyword id="KW-0963">Cytoplasm</keyword>
<keyword id="KW-0967">Endosome</keyword>
<keyword id="KW-0333">Golgi apparatus</keyword>
<keyword id="KW-0446">Lipid-binding</keyword>
<keyword id="KW-0472">Membrane</keyword>
<keyword id="KW-0597">Phosphoprotein</keyword>
<keyword id="KW-0653">Protein transport</keyword>
<keyword id="KW-1185">Reference proteome</keyword>
<keyword id="KW-0813">Transport</keyword>
<comment type="function">
    <text evidence="1">Plays a role in vesicular protein sorting (By similarity). Acts at the crossroads between the secretory and endocytic pathways. Is involved in the endosome to vacuole protein transport and, as component of the membrane-associated retromer complex, is also involved in endosome-to-Golgi retrograde transport (By similarity). Also involved in the efficient sorting of seed storage protein globulin 12S.</text>
</comment>
<comment type="subunit">
    <text evidence="5">Homodimer. Heterodimer with SNX1 or SNX2A. Component of the retromer complex which consists of VPS29 (MAG1), VPS26 (VPS26A or VPS26B), VPS35 (VPS35A or VPS35B or VPS35C), VPS5/17 (SNX1 or SNX2A or SNX2B).</text>
</comment>
<comment type="interaction">
    <interactant intactId="EBI-5258249">
        <id>Q8L5Z7</id>
    </interactant>
    <interactant intactId="EBI-1543026">
        <id>Q9FG38</id>
        <label>SNX1</label>
    </interactant>
    <organismsDiffer>false</organismsDiffer>
    <experiments>6</experiments>
</comment>
<comment type="interaction">
    <interactant intactId="EBI-5258249">
        <id>Q8L5Z7</id>
    </interactant>
    <interactant intactId="EBI-5258273">
        <id>B9DFS6</id>
        <label>SNX2B</label>
    </interactant>
    <organismsDiffer>false</organismsDiffer>
    <experiments>4</experiments>
</comment>
<comment type="subcellular location">
    <subcellularLocation>
        <location>Cytoplasm</location>
    </subcellularLocation>
    <subcellularLocation>
        <location evidence="1">Endosome membrane</location>
        <topology evidence="1">Peripheral membrane protein</topology>
        <orientation evidence="1">Cytoplasmic side</orientation>
    </subcellularLocation>
    <subcellularLocation>
        <location evidence="1">Prevacuolar compartment membrane</location>
        <topology evidence="1">Peripheral membrane protein</topology>
        <orientation evidence="1">Cytoplasmic side</orientation>
    </subcellularLocation>
    <subcellularLocation>
        <location>Golgi apparatus</location>
        <location>trans-Golgi network membrane</location>
        <topology>Peripheral membrane protein</topology>
        <orientation>Cytoplasmic side</orientation>
    </subcellularLocation>
</comment>
<comment type="tissue specificity">
    <text evidence="4 5">Ubiquitously expressed but at a lower level in flowers, siliques, and senescing leaves.</text>
</comment>
<comment type="domain">
    <text evidence="1">The PX domain binds phosphatidylinositol 3-phosphate which is necessary for peripheral membrane localization.</text>
</comment>
<comment type="disruption phenotype">
    <text evidence="5">Reduced rosette size and inflorescence length as well as root gravitropism defects in snx2a and snx2b double mutant. Accumulation of storage protein globulin 12S in dry seeds.</text>
</comment>
<comment type="similarity">
    <text evidence="6">Belongs to the sorting nexin family.</text>
</comment>
<comment type="sequence caution" evidence="6">
    <conflict type="erroneous initiation">
        <sequence resource="EMBL-CDS" id="BAB10259"/>
    </conflict>
    <text>Truncated N-terminus.</text>
</comment>
<gene>
    <name type="primary">SNX2A</name>
    <name type="ordered locus">At5g58440</name>
    <name type="ORF">MQJ2.4</name>
</gene>
<name>SNX2A_ARATH</name>
<feature type="chain" id="PRO_0000414720" description="Sorting nexin 2A">
    <location>
        <begin position="1"/>
        <end position="587"/>
    </location>
</feature>
<feature type="domain" description="PX" evidence="2">
    <location>
        <begin position="157"/>
        <end position="277"/>
    </location>
</feature>
<feature type="domain" description="BAR">
    <location>
        <begin position="331"/>
        <end position="586"/>
    </location>
</feature>
<feature type="region of interest" description="Disordered" evidence="3">
    <location>
        <begin position="1"/>
        <end position="78"/>
    </location>
</feature>
<feature type="region of interest" description="Disordered" evidence="3">
    <location>
        <begin position="115"/>
        <end position="151"/>
    </location>
</feature>
<feature type="compositionally biased region" description="Polar residues" evidence="3">
    <location>
        <begin position="42"/>
        <end position="59"/>
    </location>
</feature>
<feature type="compositionally biased region" description="Polar residues" evidence="3">
    <location>
        <begin position="123"/>
        <end position="134"/>
    </location>
</feature>
<feature type="compositionally biased region" description="Low complexity" evidence="3">
    <location>
        <begin position="135"/>
        <end position="150"/>
    </location>
</feature>
<feature type="binding site" evidence="1">
    <location>
        <position position="201"/>
    </location>
    <ligand>
        <name>a 1,2-diacyl-sn-glycero-3-phospho-(1D-myo-inositol-3-phosphate)</name>
        <dbReference type="ChEBI" id="CHEBI:58088"/>
    </ligand>
</feature>
<feature type="binding site" evidence="1">
    <location>
        <position position="227"/>
    </location>
    <ligand>
        <name>a 1,2-diacyl-sn-glycero-3-phospho-(1D-myo-inositol-3-phosphate)</name>
        <dbReference type="ChEBI" id="CHEBI:58088"/>
    </ligand>
</feature>
<feature type="binding site" evidence="1">
    <location>
        <position position="244"/>
    </location>
    <ligand>
        <name>a 1,2-diacyl-sn-glycero-3-phospho-(1D-myo-inositol-3-phosphate)</name>
        <dbReference type="ChEBI" id="CHEBI:58088"/>
    </ligand>
</feature>
<feature type="modified residue" description="Phosphoserine" evidence="7">
    <location>
        <position position="144"/>
    </location>
</feature>
<protein>
    <recommendedName>
        <fullName>Sorting nexin 2A</fullName>
    </recommendedName>
</protein>
<evidence type="ECO:0000250" key="1"/>
<evidence type="ECO:0000255" key="2">
    <source>
        <dbReference type="PROSITE-ProRule" id="PRU00147"/>
    </source>
</evidence>
<evidence type="ECO:0000256" key="3">
    <source>
        <dbReference type="SAM" id="MobiDB-lite"/>
    </source>
</evidence>
<evidence type="ECO:0000269" key="4">
    <source>
    </source>
</evidence>
<evidence type="ECO:0000269" key="5">
    <source>
    </source>
</evidence>
<evidence type="ECO:0000305" key="6"/>
<evidence type="ECO:0007744" key="7">
    <source>
    </source>
</evidence>
<proteinExistence type="evidence at protein level"/>
<accession>Q8L5Z7</accession>
<accession>Q9FGH8</accession>
<reference key="1">
    <citation type="submission" date="1999-04" db="EMBL/GenBank/DDBJ databases">
        <title>Structural analysis of Arabidopsis thaliana chromosome 5. XI.</title>
        <authorList>
            <person name="Kaneko T."/>
            <person name="Katoh T."/>
            <person name="Asamizu E."/>
            <person name="Sato S."/>
            <person name="Nakamura Y."/>
            <person name="Kotani H."/>
            <person name="Tabata S."/>
        </authorList>
    </citation>
    <scope>NUCLEOTIDE SEQUENCE [LARGE SCALE GENOMIC DNA]</scope>
    <source>
        <strain>cv. Columbia</strain>
    </source>
</reference>
<reference key="2">
    <citation type="journal article" date="2017" name="Plant J.">
        <title>Araport11: a complete reannotation of the Arabidopsis thaliana reference genome.</title>
        <authorList>
            <person name="Cheng C.Y."/>
            <person name="Krishnakumar V."/>
            <person name="Chan A.P."/>
            <person name="Thibaud-Nissen F."/>
            <person name="Schobel S."/>
            <person name="Town C.D."/>
        </authorList>
    </citation>
    <scope>GENOME REANNOTATION</scope>
    <source>
        <strain>cv. Columbia</strain>
    </source>
</reference>
<reference key="3">
    <citation type="journal article" date="2003" name="Science">
        <title>Empirical analysis of transcriptional activity in the Arabidopsis genome.</title>
        <authorList>
            <person name="Yamada K."/>
            <person name="Lim J."/>
            <person name="Dale J.M."/>
            <person name="Chen H."/>
            <person name="Shinn P."/>
            <person name="Palm C.J."/>
            <person name="Southwick A.M."/>
            <person name="Wu H.C."/>
            <person name="Kim C.J."/>
            <person name="Nguyen M."/>
            <person name="Pham P.K."/>
            <person name="Cheuk R.F."/>
            <person name="Karlin-Newmann G."/>
            <person name="Liu S.X."/>
            <person name="Lam B."/>
            <person name="Sakano H."/>
            <person name="Wu T."/>
            <person name="Yu G."/>
            <person name="Miranda M."/>
            <person name="Quach H.L."/>
            <person name="Tripp M."/>
            <person name="Chang C.H."/>
            <person name="Lee J.M."/>
            <person name="Toriumi M.J."/>
            <person name="Chan M.M."/>
            <person name="Tang C.C."/>
            <person name="Onodera C.S."/>
            <person name="Deng J.M."/>
            <person name="Akiyama K."/>
            <person name="Ansari Y."/>
            <person name="Arakawa T."/>
            <person name="Banh J."/>
            <person name="Banno F."/>
            <person name="Bowser L."/>
            <person name="Brooks S.Y."/>
            <person name="Carninci P."/>
            <person name="Chao Q."/>
            <person name="Choy N."/>
            <person name="Enju A."/>
            <person name="Goldsmith A.D."/>
            <person name="Gurjal M."/>
            <person name="Hansen N.F."/>
            <person name="Hayashizaki Y."/>
            <person name="Johnson-Hopson C."/>
            <person name="Hsuan V.W."/>
            <person name="Iida K."/>
            <person name="Karnes M."/>
            <person name="Khan S."/>
            <person name="Koesema E."/>
            <person name="Ishida J."/>
            <person name="Jiang P.X."/>
            <person name="Jones T."/>
            <person name="Kawai J."/>
            <person name="Kamiya A."/>
            <person name="Meyers C."/>
            <person name="Nakajima M."/>
            <person name="Narusaka M."/>
            <person name="Seki M."/>
            <person name="Sakurai T."/>
            <person name="Satou M."/>
            <person name="Tamse R."/>
            <person name="Vaysberg M."/>
            <person name="Wallender E.K."/>
            <person name="Wong C."/>
            <person name="Yamamura Y."/>
            <person name="Yuan S."/>
            <person name="Shinozaki K."/>
            <person name="Davis R.W."/>
            <person name="Theologis A."/>
            <person name="Ecker J.R."/>
        </authorList>
    </citation>
    <scope>NUCLEOTIDE SEQUENCE [LARGE SCALE MRNA]</scope>
    <source>
        <strain>cv. Columbia</strain>
    </source>
</reference>
<reference key="4">
    <citation type="journal article" date="2003" name="Plant Physiol.">
        <title>Interaction of calmodulin, a sorting nexin and kinase-associated protein phosphatase with the Brassica oleracea S locus receptor kinase.</title>
        <authorList>
            <person name="Vanoosthuyse V."/>
            <person name="Tichtinsky G."/>
            <person name="Dumas C."/>
            <person name="Gaude T."/>
            <person name="Cock J.M."/>
        </authorList>
    </citation>
    <scope>IDENTIFICATION</scope>
</reference>
<reference key="5">
    <citation type="journal article" date="2006" name="Plant Cell">
        <title>Plant retromer, localized to the prevacuolar compartment and microvesicles in Arabidopsis, may interact with vacuolar sorting receptors.</title>
        <authorList>
            <person name="Oliviusson P."/>
            <person name="Heinzerling O."/>
            <person name="Hillmer S."/>
            <person name="Hinz G."/>
            <person name="Tse Y.C."/>
            <person name="Jiang L."/>
            <person name="Robinson D.G."/>
        </authorList>
    </citation>
    <scope>COMPONENT OF THE RETROMER COMPLEX</scope>
</reference>
<reference key="6">
    <citation type="journal article" date="2008" name="Mol. Plant">
        <title>Overexpression of Arabidopsis sorting nexin AtSNX2b inhibits endocytic trafficking to the vacuole.</title>
        <authorList>
            <person name="Phan N.Q."/>
            <person name="Kim S.J."/>
            <person name="Bassham D.C."/>
        </authorList>
    </citation>
    <scope>TISSUE SPECIFICITY</scope>
</reference>
<reference key="7">
    <citation type="journal article" date="2009" name="Plant Physiol.">
        <title>Large-scale Arabidopsis phosphoproteome profiling reveals novel chloroplast kinase substrates and phosphorylation networks.</title>
        <authorList>
            <person name="Reiland S."/>
            <person name="Messerli G."/>
            <person name="Baerenfaller K."/>
            <person name="Gerrits B."/>
            <person name="Endler A."/>
            <person name="Grossmann J."/>
            <person name="Gruissem W."/>
            <person name="Baginsky S."/>
        </authorList>
    </citation>
    <scope>PHOSPHORYLATION [LARGE SCALE ANALYSIS] AT SER-144</scope>
    <scope>IDENTIFICATION BY MASS SPECTROMETRY [LARGE SCALE ANALYSIS]</scope>
</reference>
<reference key="8">
    <citation type="journal article" date="2010" name="Plant Cell">
        <title>Analyses of sorting nexins reveal distinct retromer-subcomplex functions in development and protein sorting in Arabidopsis thaliana.</title>
        <authorList>
            <person name="Pourcher M."/>
            <person name="Santambrogio M."/>
            <person name="Thazar N."/>
            <person name="Thierry A.M."/>
            <person name="Fobis-Loisy I."/>
            <person name="Miege C."/>
            <person name="Jaillais Y."/>
            <person name="Gaude T."/>
        </authorList>
    </citation>
    <scope>DISRUPTION PHENOTYPE</scope>
    <scope>TISSUE SPECIFICITY</scope>
    <scope>SUBCELLULAR LOCATION</scope>
    <scope>SUBUNIT</scope>
</reference>
<reference key="9">
    <citation type="journal article" date="2010" name="Plant J.">
        <title>Retromer recycles vacuolar sorting receptors from the trans-Golgi network.</title>
        <authorList>
            <person name="Niemes S."/>
            <person name="Langhans M."/>
            <person name="Viotti C."/>
            <person name="Scheuring D."/>
            <person name="San Wan Yan M."/>
            <person name="Jiang L."/>
            <person name="Hillmer S."/>
            <person name="Robinson D.G."/>
            <person name="Pimpl P."/>
        </authorList>
    </citation>
    <scope>SUBCELLULAR LOCATION</scope>
</reference>